<organism>
    <name type="scientific">Paraburkholderia xenovorans (strain LB400)</name>
    <dbReference type="NCBI Taxonomy" id="266265"/>
    <lineage>
        <taxon>Bacteria</taxon>
        <taxon>Pseudomonadati</taxon>
        <taxon>Pseudomonadota</taxon>
        <taxon>Betaproteobacteria</taxon>
        <taxon>Burkholderiales</taxon>
        <taxon>Burkholderiaceae</taxon>
        <taxon>Paraburkholderia</taxon>
    </lineage>
</organism>
<dbReference type="EMBL" id="CP000270">
    <property type="protein sequence ID" value="ABE31497.1"/>
    <property type="status" value="ALT_INIT"/>
    <property type="molecule type" value="Genomic_DNA"/>
</dbReference>
<dbReference type="STRING" id="266265.Bxe_A1457"/>
<dbReference type="KEGG" id="bxb:DR64_3621"/>
<dbReference type="KEGG" id="bxe:Bxe_A1457"/>
<dbReference type="eggNOG" id="COG5487">
    <property type="taxonomic scope" value="Bacteria"/>
</dbReference>
<dbReference type="Proteomes" id="UP000001817">
    <property type="component" value="Chromosome 1"/>
</dbReference>
<dbReference type="GO" id="GO:0005886">
    <property type="term" value="C:plasma membrane"/>
    <property type="evidence" value="ECO:0007669"/>
    <property type="project" value="UniProtKB-SubCell"/>
</dbReference>
<dbReference type="HAMAP" id="MF_01361">
    <property type="entry name" value="UPF0391"/>
    <property type="match status" value="1"/>
</dbReference>
<dbReference type="InterPro" id="IPR009760">
    <property type="entry name" value="DUF1328"/>
</dbReference>
<dbReference type="NCBIfam" id="NF010229">
    <property type="entry name" value="PRK13682.1-4"/>
    <property type="match status" value="1"/>
</dbReference>
<dbReference type="Pfam" id="PF07043">
    <property type="entry name" value="DUF1328"/>
    <property type="match status" value="1"/>
</dbReference>
<dbReference type="PIRSF" id="PIRSF036466">
    <property type="entry name" value="UCP036466"/>
    <property type="match status" value="1"/>
</dbReference>
<feature type="chain" id="PRO_0000256728" description="UPF0391 membrane protein Bxeno_A2959">
    <location>
        <begin position="1"/>
        <end position="58"/>
    </location>
</feature>
<feature type="transmembrane region" description="Helical" evidence="1">
    <location>
        <begin position="4"/>
        <end position="24"/>
    </location>
</feature>
<feature type="transmembrane region" description="Helical" evidence="1">
    <location>
        <begin position="33"/>
        <end position="53"/>
    </location>
</feature>
<gene>
    <name type="ordered locus">Bxeno_A2959</name>
    <name type="ORF">Bxe_A1457</name>
</gene>
<sequence>MLKWALFFAVVAVIAGVLGFTGVAAGAAAIAKFLFIVFVILCVVFLVLGFVVTKKIVD</sequence>
<name>Y2959_PARXL</name>
<comment type="subcellular location">
    <subcellularLocation>
        <location evidence="1">Cell membrane</location>
        <topology evidence="1">Multi-pass membrane protein</topology>
    </subcellularLocation>
</comment>
<comment type="similarity">
    <text evidence="1">Belongs to the UPF0391 family.</text>
</comment>
<comment type="sequence caution" evidence="2">
    <conflict type="erroneous initiation">
        <sequence resource="EMBL-CDS" id="ABE31497"/>
    </conflict>
</comment>
<reference key="1">
    <citation type="journal article" date="2006" name="Proc. Natl. Acad. Sci. U.S.A.">
        <title>Burkholderia xenovorans LB400 harbors a multi-replicon, 9.73-Mbp genome shaped for versatility.</title>
        <authorList>
            <person name="Chain P.S.G."/>
            <person name="Denef V.J."/>
            <person name="Konstantinidis K.T."/>
            <person name="Vergez L.M."/>
            <person name="Agullo L."/>
            <person name="Reyes V.L."/>
            <person name="Hauser L."/>
            <person name="Cordova M."/>
            <person name="Gomez L."/>
            <person name="Gonzalez M."/>
            <person name="Land M."/>
            <person name="Lao V."/>
            <person name="Larimer F."/>
            <person name="LiPuma J.J."/>
            <person name="Mahenthiralingam E."/>
            <person name="Malfatti S.A."/>
            <person name="Marx C.J."/>
            <person name="Parnell J.J."/>
            <person name="Ramette A."/>
            <person name="Richardson P."/>
            <person name="Seeger M."/>
            <person name="Smith D."/>
            <person name="Spilker T."/>
            <person name="Sul W.J."/>
            <person name="Tsoi T.V."/>
            <person name="Ulrich L.E."/>
            <person name="Zhulin I.B."/>
            <person name="Tiedje J.M."/>
        </authorList>
    </citation>
    <scope>NUCLEOTIDE SEQUENCE [LARGE SCALE GENOMIC DNA]</scope>
    <source>
        <strain>LB400</strain>
    </source>
</reference>
<keyword id="KW-1003">Cell membrane</keyword>
<keyword id="KW-0472">Membrane</keyword>
<keyword id="KW-1185">Reference proteome</keyword>
<keyword id="KW-0812">Transmembrane</keyword>
<keyword id="KW-1133">Transmembrane helix</keyword>
<evidence type="ECO:0000255" key="1">
    <source>
        <dbReference type="HAMAP-Rule" id="MF_01361"/>
    </source>
</evidence>
<evidence type="ECO:0000305" key="2"/>
<proteinExistence type="inferred from homology"/>
<accession>Q13WP2</accession>
<protein>
    <recommendedName>
        <fullName evidence="1">UPF0391 membrane protein Bxeno_A2959</fullName>
    </recommendedName>
</protein>